<reference key="1">
    <citation type="journal article" date="2004" name="PLoS Biol.">
        <title>Phylogenomics of the reproductive parasite Wolbachia pipientis wMel: a streamlined genome overrun by mobile genetic elements.</title>
        <authorList>
            <person name="Wu M."/>
            <person name="Sun L.V."/>
            <person name="Vamathevan J.J."/>
            <person name="Riegler M."/>
            <person name="DeBoy R.T."/>
            <person name="Brownlie J.C."/>
            <person name="McGraw E.A."/>
            <person name="Martin W."/>
            <person name="Esser C."/>
            <person name="Ahmadinejad N."/>
            <person name="Wiegand C."/>
            <person name="Madupu R."/>
            <person name="Beanan M.J."/>
            <person name="Brinkac L.M."/>
            <person name="Daugherty S.C."/>
            <person name="Durkin A.S."/>
            <person name="Kolonay J.F."/>
            <person name="Nelson W.C."/>
            <person name="Mohamoud Y."/>
            <person name="Lee P."/>
            <person name="Berry K.J."/>
            <person name="Young M.B."/>
            <person name="Utterback T.R."/>
            <person name="Weidman J.F."/>
            <person name="Nierman W.C."/>
            <person name="Paulsen I.T."/>
            <person name="Nelson K.E."/>
            <person name="Tettelin H."/>
            <person name="O'Neill S.L."/>
            <person name="Eisen J.A."/>
        </authorList>
    </citation>
    <scope>NUCLEOTIDE SEQUENCE [LARGE SCALE GENOMIC DNA]</scope>
</reference>
<dbReference type="EC" id="2.8.1.8" evidence="1"/>
<dbReference type="EMBL" id="AE017196">
    <property type="protein sequence ID" value="AAS14118.1"/>
    <property type="molecule type" value="Genomic_DNA"/>
</dbReference>
<dbReference type="RefSeq" id="WP_010082514.1">
    <property type="nucleotide sequence ID" value="NZ_OX384529.1"/>
</dbReference>
<dbReference type="SMR" id="P61200"/>
<dbReference type="EnsemblBacteria" id="AAS14118">
    <property type="protein sequence ID" value="AAS14118"/>
    <property type="gene ID" value="WD_0392"/>
</dbReference>
<dbReference type="GeneID" id="70035887"/>
<dbReference type="KEGG" id="wol:WD_0392"/>
<dbReference type="eggNOG" id="COG0320">
    <property type="taxonomic scope" value="Bacteria"/>
</dbReference>
<dbReference type="UniPathway" id="UPA00538">
    <property type="reaction ID" value="UER00593"/>
</dbReference>
<dbReference type="Proteomes" id="UP000008215">
    <property type="component" value="Chromosome"/>
</dbReference>
<dbReference type="GO" id="GO:0005737">
    <property type="term" value="C:cytoplasm"/>
    <property type="evidence" value="ECO:0007669"/>
    <property type="project" value="UniProtKB-SubCell"/>
</dbReference>
<dbReference type="GO" id="GO:0051539">
    <property type="term" value="F:4 iron, 4 sulfur cluster binding"/>
    <property type="evidence" value="ECO:0007669"/>
    <property type="project" value="UniProtKB-UniRule"/>
</dbReference>
<dbReference type="GO" id="GO:0016992">
    <property type="term" value="F:lipoate synthase activity"/>
    <property type="evidence" value="ECO:0007669"/>
    <property type="project" value="UniProtKB-UniRule"/>
</dbReference>
<dbReference type="GO" id="GO:0046872">
    <property type="term" value="F:metal ion binding"/>
    <property type="evidence" value="ECO:0007669"/>
    <property type="project" value="UniProtKB-KW"/>
</dbReference>
<dbReference type="CDD" id="cd01335">
    <property type="entry name" value="Radical_SAM"/>
    <property type="match status" value="1"/>
</dbReference>
<dbReference type="FunFam" id="3.20.20.70:FF:000040">
    <property type="entry name" value="Lipoyl synthase"/>
    <property type="match status" value="1"/>
</dbReference>
<dbReference type="Gene3D" id="3.20.20.70">
    <property type="entry name" value="Aldolase class I"/>
    <property type="match status" value="1"/>
</dbReference>
<dbReference type="HAMAP" id="MF_00206">
    <property type="entry name" value="Lipoyl_synth"/>
    <property type="match status" value="1"/>
</dbReference>
<dbReference type="InterPro" id="IPR013785">
    <property type="entry name" value="Aldolase_TIM"/>
</dbReference>
<dbReference type="InterPro" id="IPR006638">
    <property type="entry name" value="Elp3/MiaA/NifB-like_rSAM"/>
</dbReference>
<dbReference type="InterPro" id="IPR031691">
    <property type="entry name" value="LIAS_N"/>
</dbReference>
<dbReference type="InterPro" id="IPR003698">
    <property type="entry name" value="Lipoyl_synth"/>
</dbReference>
<dbReference type="InterPro" id="IPR007197">
    <property type="entry name" value="rSAM"/>
</dbReference>
<dbReference type="NCBIfam" id="TIGR00510">
    <property type="entry name" value="lipA"/>
    <property type="match status" value="1"/>
</dbReference>
<dbReference type="NCBIfam" id="NF004019">
    <property type="entry name" value="PRK05481.1"/>
    <property type="match status" value="1"/>
</dbReference>
<dbReference type="NCBIfam" id="NF009544">
    <property type="entry name" value="PRK12928.1"/>
    <property type="match status" value="1"/>
</dbReference>
<dbReference type="PANTHER" id="PTHR10949">
    <property type="entry name" value="LIPOYL SYNTHASE"/>
    <property type="match status" value="1"/>
</dbReference>
<dbReference type="PANTHER" id="PTHR10949:SF0">
    <property type="entry name" value="LIPOYL SYNTHASE, MITOCHONDRIAL"/>
    <property type="match status" value="1"/>
</dbReference>
<dbReference type="Pfam" id="PF16881">
    <property type="entry name" value="LIAS_N"/>
    <property type="match status" value="1"/>
</dbReference>
<dbReference type="Pfam" id="PF04055">
    <property type="entry name" value="Radical_SAM"/>
    <property type="match status" value="1"/>
</dbReference>
<dbReference type="PIRSF" id="PIRSF005963">
    <property type="entry name" value="Lipoyl_synth"/>
    <property type="match status" value="1"/>
</dbReference>
<dbReference type="SFLD" id="SFLDF00271">
    <property type="entry name" value="lipoyl_synthase"/>
    <property type="match status" value="1"/>
</dbReference>
<dbReference type="SFLD" id="SFLDG01058">
    <property type="entry name" value="lipoyl_synthase_like"/>
    <property type="match status" value="1"/>
</dbReference>
<dbReference type="SMART" id="SM00729">
    <property type="entry name" value="Elp3"/>
    <property type="match status" value="1"/>
</dbReference>
<dbReference type="SUPFAM" id="SSF102114">
    <property type="entry name" value="Radical SAM enzymes"/>
    <property type="match status" value="1"/>
</dbReference>
<dbReference type="PROSITE" id="PS51918">
    <property type="entry name" value="RADICAL_SAM"/>
    <property type="match status" value="1"/>
</dbReference>
<comment type="function">
    <text evidence="1">Catalyzes the radical-mediated insertion of two sulfur atoms into the C-6 and C-8 positions of the octanoyl moiety bound to the lipoyl domains of lipoate-dependent enzymes, thereby converting the octanoylated domains into lipoylated derivatives.</text>
</comment>
<comment type="catalytic activity">
    <reaction evidence="1">
        <text>[[Fe-S] cluster scaffold protein carrying a second [4Fe-4S](2+) cluster] + N(6)-octanoyl-L-lysyl-[protein] + 2 oxidized [2Fe-2S]-[ferredoxin] + 2 S-adenosyl-L-methionine + 4 H(+) = [[Fe-S] cluster scaffold protein] + N(6)-[(R)-dihydrolipoyl]-L-lysyl-[protein] + 4 Fe(3+) + 2 hydrogen sulfide + 2 5'-deoxyadenosine + 2 L-methionine + 2 reduced [2Fe-2S]-[ferredoxin]</text>
        <dbReference type="Rhea" id="RHEA:16585"/>
        <dbReference type="Rhea" id="RHEA-COMP:9928"/>
        <dbReference type="Rhea" id="RHEA-COMP:10000"/>
        <dbReference type="Rhea" id="RHEA-COMP:10001"/>
        <dbReference type="Rhea" id="RHEA-COMP:10475"/>
        <dbReference type="Rhea" id="RHEA-COMP:14568"/>
        <dbReference type="Rhea" id="RHEA-COMP:14569"/>
        <dbReference type="ChEBI" id="CHEBI:15378"/>
        <dbReference type="ChEBI" id="CHEBI:17319"/>
        <dbReference type="ChEBI" id="CHEBI:29034"/>
        <dbReference type="ChEBI" id="CHEBI:29919"/>
        <dbReference type="ChEBI" id="CHEBI:33722"/>
        <dbReference type="ChEBI" id="CHEBI:33737"/>
        <dbReference type="ChEBI" id="CHEBI:33738"/>
        <dbReference type="ChEBI" id="CHEBI:57844"/>
        <dbReference type="ChEBI" id="CHEBI:59789"/>
        <dbReference type="ChEBI" id="CHEBI:78809"/>
        <dbReference type="ChEBI" id="CHEBI:83100"/>
        <dbReference type="EC" id="2.8.1.8"/>
    </reaction>
</comment>
<comment type="cofactor">
    <cofactor evidence="1">
        <name>[4Fe-4S] cluster</name>
        <dbReference type="ChEBI" id="CHEBI:49883"/>
    </cofactor>
    <text evidence="1">Binds 2 [4Fe-4S] clusters per subunit. One cluster is coordinated with 3 cysteines and an exchangeable S-adenosyl-L-methionine.</text>
</comment>
<comment type="pathway">
    <text evidence="1">Protein modification; protein lipoylation via endogenous pathway; protein N(6)-(lipoyl)lysine from octanoyl-[acyl-carrier-protein]: step 2/2.</text>
</comment>
<comment type="subcellular location">
    <subcellularLocation>
        <location evidence="1">Cytoplasm</location>
    </subcellularLocation>
</comment>
<comment type="similarity">
    <text evidence="1">Belongs to the radical SAM superfamily. Lipoyl synthase family.</text>
</comment>
<protein>
    <recommendedName>
        <fullName evidence="1">Lipoyl synthase</fullName>
        <ecNumber evidence="1">2.8.1.8</ecNumber>
    </recommendedName>
    <alternativeName>
        <fullName evidence="1">Lip-syn</fullName>
        <shortName evidence="1">LS</shortName>
    </alternativeName>
    <alternativeName>
        <fullName evidence="1">Lipoate synthase</fullName>
    </alternativeName>
    <alternativeName>
        <fullName evidence="1">Lipoic acid synthase</fullName>
    </alternativeName>
    <alternativeName>
        <fullName evidence="1">Sulfur insertion protein LipA</fullName>
    </alternativeName>
</protein>
<proteinExistence type="inferred from homology"/>
<name>LIPA_WOLPM</name>
<organism>
    <name type="scientific">Wolbachia pipientis wMel</name>
    <dbReference type="NCBI Taxonomy" id="163164"/>
    <lineage>
        <taxon>Bacteria</taxon>
        <taxon>Pseudomonadati</taxon>
        <taxon>Pseudomonadota</taxon>
        <taxon>Alphaproteobacteria</taxon>
        <taxon>Rickettsiales</taxon>
        <taxon>Anaplasmataceae</taxon>
        <taxon>Wolbachieae</taxon>
        <taxon>Wolbachia</taxon>
    </lineage>
</organism>
<gene>
    <name evidence="1" type="primary">lipA</name>
    <name type="ordered locus">WD_0392</name>
</gene>
<accession>P61200</accession>
<evidence type="ECO:0000255" key="1">
    <source>
        <dbReference type="HAMAP-Rule" id="MF_00206"/>
    </source>
</evidence>
<evidence type="ECO:0000255" key="2">
    <source>
        <dbReference type="PROSITE-ProRule" id="PRU01266"/>
    </source>
</evidence>
<feature type="chain" id="PRO_0000102382" description="Lipoyl synthase">
    <location>
        <begin position="1"/>
        <end position="287"/>
    </location>
</feature>
<feature type="domain" description="Radical SAM core" evidence="2">
    <location>
        <begin position="46"/>
        <end position="262"/>
    </location>
</feature>
<feature type="binding site" evidence="1">
    <location>
        <position position="34"/>
    </location>
    <ligand>
        <name>[4Fe-4S] cluster</name>
        <dbReference type="ChEBI" id="CHEBI:49883"/>
        <label>1</label>
    </ligand>
</feature>
<feature type="binding site" evidence="1">
    <location>
        <position position="39"/>
    </location>
    <ligand>
        <name>[4Fe-4S] cluster</name>
        <dbReference type="ChEBI" id="CHEBI:49883"/>
        <label>1</label>
    </ligand>
</feature>
<feature type="binding site" evidence="1">
    <location>
        <position position="45"/>
    </location>
    <ligand>
        <name>[4Fe-4S] cluster</name>
        <dbReference type="ChEBI" id="CHEBI:49883"/>
        <label>1</label>
    </ligand>
</feature>
<feature type="binding site" evidence="1">
    <location>
        <position position="60"/>
    </location>
    <ligand>
        <name>[4Fe-4S] cluster</name>
        <dbReference type="ChEBI" id="CHEBI:49883"/>
        <label>2</label>
        <note>4Fe-4S-S-AdoMet</note>
    </ligand>
</feature>
<feature type="binding site" evidence="1">
    <location>
        <position position="64"/>
    </location>
    <ligand>
        <name>[4Fe-4S] cluster</name>
        <dbReference type="ChEBI" id="CHEBI:49883"/>
        <label>2</label>
        <note>4Fe-4S-S-AdoMet</note>
    </ligand>
</feature>
<feature type="binding site" evidence="1">
    <location>
        <position position="67"/>
    </location>
    <ligand>
        <name>[4Fe-4S] cluster</name>
        <dbReference type="ChEBI" id="CHEBI:49883"/>
        <label>2</label>
        <note>4Fe-4S-S-AdoMet</note>
    </ligand>
</feature>
<feature type="binding site" evidence="1">
    <location>
        <position position="273"/>
    </location>
    <ligand>
        <name>[4Fe-4S] cluster</name>
        <dbReference type="ChEBI" id="CHEBI:49883"/>
        <label>1</label>
    </ligand>
</feature>
<keyword id="KW-0004">4Fe-4S</keyword>
<keyword id="KW-0963">Cytoplasm</keyword>
<keyword id="KW-0408">Iron</keyword>
<keyword id="KW-0411">Iron-sulfur</keyword>
<keyword id="KW-0479">Metal-binding</keyword>
<keyword id="KW-0949">S-adenosyl-L-methionine</keyword>
<keyword id="KW-0808">Transferase</keyword>
<sequence>MHSKPQWLRAKAPTGEVFNETLNIVKLHNLHTVCEEAACPNIGECWNKRHATVMILGSVCTRACAFCNVATGIPDKLDPHEPENLAKAIKKLNLKHVVITSVDRDDLPDGGANQFIQCIEEIRKITSETTIEILTPDFLNKKGAFEAIAVASPDVYNHNIETVPRLYAKIRPRARYFHSLYLLKMVKQINPKVFTKSGLMVGLGETKEEILQVMDDLRSAEVDFITIGQYLQPTPKHAKLDRYVTPEEFEHYKYIAYSKGFLVVASSPLTRSSYHAEEDFNRLKACR</sequence>